<organism>
    <name type="scientific">Bacillus cereus (strain AH820)</name>
    <dbReference type="NCBI Taxonomy" id="405535"/>
    <lineage>
        <taxon>Bacteria</taxon>
        <taxon>Bacillati</taxon>
        <taxon>Bacillota</taxon>
        <taxon>Bacilli</taxon>
        <taxon>Bacillales</taxon>
        <taxon>Bacillaceae</taxon>
        <taxon>Bacillus</taxon>
        <taxon>Bacillus cereus group</taxon>
    </lineage>
</organism>
<protein>
    <recommendedName>
        <fullName evidence="1">Cysteine--tRNA ligase</fullName>
        <ecNumber evidence="1">6.1.1.16</ecNumber>
    </recommendedName>
    <alternativeName>
        <fullName evidence="1">Cysteinyl-tRNA synthetase</fullName>
        <shortName evidence="1">CysRS</shortName>
    </alternativeName>
</protein>
<keyword id="KW-0030">Aminoacyl-tRNA synthetase</keyword>
<keyword id="KW-0067">ATP-binding</keyword>
<keyword id="KW-0963">Cytoplasm</keyword>
<keyword id="KW-0436">Ligase</keyword>
<keyword id="KW-0479">Metal-binding</keyword>
<keyword id="KW-0547">Nucleotide-binding</keyword>
<keyword id="KW-0597">Phosphoprotein</keyword>
<keyword id="KW-0648">Protein biosynthesis</keyword>
<keyword id="KW-0862">Zinc</keyword>
<sequence>MTIHIYNTLTRQKEEFTPLEENKVKMYVCGPTVYNYIHIGNARPPMVFDTVRRYLEYKGYDVQYVSNFTDVDDKLIKAANELGEDVPTIADRFVEAYFEDVTALGCKHATVHPRVTENMDIIIEFIQELVNKGYAYESEGDVYFRTKEFEGYGKLSHQPIADLRHGARIEVGEKKQDPLDFALWKAAKEGEIFWESPWGQGRPGWHIECSAMARKYLGDTIDIHAGGQDLAFPHHENEIAQSEALTGKTFARYWMHNGYININNEKMSKSLGNFILVHDIIKQYDPQLIRFFMLSVHYRHPINFSEELLQSTNNGLERIKTAYGNLKHRMESSTDLTDHNEKWLADLEKFQTAFEEAMNDDFNTANAITELYNVANHANQYLLEEHTSTVVIEAYVKQLETLFDILGLELAQEELLDEEIEALIQKRIEARKNRDFALSDQIRDDLKDRNIILEDTAQGTRWKRG</sequence>
<proteinExistence type="inferred from homology"/>
<feature type="chain" id="PRO_1000199038" description="Cysteine--tRNA ligase">
    <location>
        <begin position="1"/>
        <end position="465"/>
    </location>
</feature>
<feature type="short sequence motif" description="'HIGH' region">
    <location>
        <begin position="31"/>
        <end position="41"/>
    </location>
</feature>
<feature type="short sequence motif" description="'KMSKS' region">
    <location>
        <begin position="266"/>
        <end position="270"/>
    </location>
</feature>
<feature type="binding site" evidence="1">
    <location>
        <position position="29"/>
    </location>
    <ligand>
        <name>Zn(2+)</name>
        <dbReference type="ChEBI" id="CHEBI:29105"/>
    </ligand>
</feature>
<feature type="binding site" evidence="1">
    <location>
        <position position="209"/>
    </location>
    <ligand>
        <name>Zn(2+)</name>
        <dbReference type="ChEBI" id="CHEBI:29105"/>
    </ligand>
</feature>
<feature type="binding site" evidence="1">
    <location>
        <position position="234"/>
    </location>
    <ligand>
        <name>Zn(2+)</name>
        <dbReference type="ChEBI" id="CHEBI:29105"/>
    </ligand>
</feature>
<feature type="binding site" evidence="1">
    <location>
        <position position="238"/>
    </location>
    <ligand>
        <name>Zn(2+)</name>
        <dbReference type="ChEBI" id="CHEBI:29105"/>
    </ligand>
</feature>
<feature type="binding site" evidence="1">
    <location>
        <position position="269"/>
    </location>
    <ligand>
        <name>ATP</name>
        <dbReference type="ChEBI" id="CHEBI:30616"/>
    </ligand>
</feature>
<feature type="modified residue" description="Phosphoserine" evidence="1">
    <location>
        <position position="270"/>
    </location>
</feature>
<comment type="catalytic activity">
    <reaction evidence="1">
        <text>tRNA(Cys) + L-cysteine + ATP = L-cysteinyl-tRNA(Cys) + AMP + diphosphate</text>
        <dbReference type="Rhea" id="RHEA:17773"/>
        <dbReference type="Rhea" id="RHEA-COMP:9661"/>
        <dbReference type="Rhea" id="RHEA-COMP:9679"/>
        <dbReference type="ChEBI" id="CHEBI:30616"/>
        <dbReference type="ChEBI" id="CHEBI:33019"/>
        <dbReference type="ChEBI" id="CHEBI:35235"/>
        <dbReference type="ChEBI" id="CHEBI:78442"/>
        <dbReference type="ChEBI" id="CHEBI:78517"/>
        <dbReference type="ChEBI" id="CHEBI:456215"/>
        <dbReference type="EC" id="6.1.1.16"/>
    </reaction>
</comment>
<comment type="cofactor">
    <cofactor evidence="1">
        <name>Zn(2+)</name>
        <dbReference type="ChEBI" id="CHEBI:29105"/>
    </cofactor>
    <text evidence="1">Binds 1 zinc ion per subunit.</text>
</comment>
<comment type="subunit">
    <text evidence="1">Monomer.</text>
</comment>
<comment type="subcellular location">
    <subcellularLocation>
        <location evidence="1">Cytoplasm</location>
    </subcellularLocation>
</comment>
<comment type="similarity">
    <text evidence="1">Belongs to the class-I aminoacyl-tRNA synthetase family.</text>
</comment>
<gene>
    <name evidence="1" type="primary">cysS</name>
    <name type="ordered locus">BCAH820_0100</name>
</gene>
<dbReference type="EC" id="6.1.1.16" evidence="1"/>
<dbReference type="EMBL" id="CP001283">
    <property type="protein sequence ID" value="ACK89996.1"/>
    <property type="molecule type" value="Genomic_DNA"/>
</dbReference>
<dbReference type="RefSeq" id="WP_000152268.1">
    <property type="nucleotide sequence ID" value="NC_011773.1"/>
</dbReference>
<dbReference type="SMR" id="B7JK97"/>
<dbReference type="GeneID" id="45020134"/>
<dbReference type="KEGG" id="bcu:BCAH820_0100"/>
<dbReference type="HOGENOM" id="CLU_013528_0_1_9"/>
<dbReference type="Proteomes" id="UP000001363">
    <property type="component" value="Chromosome"/>
</dbReference>
<dbReference type="GO" id="GO:0005829">
    <property type="term" value="C:cytosol"/>
    <property type="evidence" value="ECO:0007669"/>
    <property type="project" value="TreeGrafter"/>
</dbReference>
<dbReference type="GO" id="GO:0005524">
    <property type="term" value="F:ATP binding"/>
    <property type="evidence" value="ECO:0007669"/>
    <property type="project" value="UniProtKB-UniRule"/>
</dbReference>
<dbReference type="GO" id="GO:0004817">
    <property type="term" value="F:cysteine-tRNA ligase activity"/>
    <property type="evidence" value="ECO:0007669"/>
    <property type="project" value="UniProtKB-UniRule"/>
</dbReference>
<dbReference type="GO" id="GO:0008270">
    <property type="term" value="F:zinc ion binding"/>
    <property type="evidence" value="ECO:0007669"/>
    <property type="project" value="UniProtKB-UniRule"/>
</dbReference>
<dbReference type="GO" id="GO:0006423">
    <property type="term" value="P:cysteinyl-tRNA aminoacylation"/>
    <property type="evidence" value="ECO:0007669"/>
    <property type="project" value="UniProtKB-UniRule"/>
</dbReference>
<dbReference type="CDD" id="cd00672">
    <property type="entry name" value="CysRS_core"/>
    <property type="match status" value="1"/>
</dbReference>
<dbReference type="FunFam" id="1.20.120.1910:FF:000002">
    <property type="entry name" value="Cysteine--tRNA ligase"/>
    <property type="match status" value="1"/>
</dbReference>
<dbReference type="FunFam" id="3.40.50.620:FF:000009">
    <property type="entry name" value="Cysteine--tRNA ligase"/>
    <property type="match status" value="1"/>
</dbReference>
<dbReference type="Gene3D" id="1.20.120.1910">
    <property type="entry name" value="Cysteine-tRNA ligase, C-terminal anti-codon recognition domain"/>
    <property type="match status" value="1"/>
</dbReference>
<dbReference type="Gene3D" id="3.40.50.620">
    <property type="entry name" value="HUPs"/>
    <property type="match status" value="1"/>
</dbReference>
<dbReference type="HAMAP" id="MF_00041">
    <property type="entry name" value="Cys_tRNA_synth"/>
    <property type="match status" value="1"/>
</dbReference>
<dbReference type="InterPro" id="IPR015803">
    <property type="entry name" value="Cys-tRNA-ligase"/>
</dbReference>
<dbReference type="InterPro" id="IPR015273">
    <property type="entry name" value="Cys-tRNA-synt_Ia_DALR"/>
</dbReference>
<dbReference type="InterPro" id="IPR024909">
    <property type="entry name" value="Cys-tRNA/MSH_ligase"/>
</dbReference>
<dbReference type="InterPro" id="IPR014729">
    <property type="entry name" value="Rossmann-like_a/b/a_fold"/>
</dbReference>
<dbReference type="InterPro" id="IPR032678">
    <property type="entry name" value="tRNA-synt_1_cat_dom"/>
</dbReference>
<dbReference type="InterPro" id="IPR009080">
    <property type="entry name" value="tRNAsynth_Ia_anticodon-bd"/>
</dbReference>
<dbReference type="NCBIfam" id="TIGR00435">
    <property type="entry name" value="cysS"/>
    <property type="match status" value="1"/>
</dbReference>
<dbReference type="PANTHER" id="PTHR10890:SF3">
    <property type="entry name" value="CYSTEINE--TRNA LIGASE, CYTOPLASMIC"/>
    <property type="match status" value="1"/>
</dbReference>
<dbReference type="PANTHER" id="PTHR10890">
    <property type="entry name" value="CYSTEINYL-TRNA SYNTHETASE"/>
    <property type="match status" value="1"/>
</dbReference>
<dbReference type="Pfam" id="PF09190">
    <property type="entry name" value="DALR_2"/>
    <property type="match status" value="1"/>
</dbReference>
<dbReference type="Pfam" id="PF01406">
    <property type="entry name" value="tRNA-synt_1e"/>
    <property type="match status" value="1"/>
</dbReference>
<dbReference type="PRINTS" id="PR00983">
    <property type="entry name" value="TRNASYNTHCYS"/>
</dbReference>
<dbReference type="SMART" id="SM00840">
    <property type="entry name" value="DALR_2"/>
    <property type="match status" value="1"/>
</dbReference>
<dbReference type="SUPFAM" id="SSF47323">
    <property type="entry name" value="Anticodon-binding domain of a subclass of class I aminoacyl-tRNA synthetases"/>
    <property type="match status" value="1"/>
</dbReference>
<dbReference type="SUPFAM" id="SSF52374">
    <property type="entry name" value="Nucleotidylyl transferase"/>
    <property type="match status" value="1"/>
</dbReference>
<accession>B7JK97</accession>
<name>SYC_BACC0</name>
<evidence type="ECO:0000255" key="1">
    <source>
        <dbReference type="HAMAP-Rule" id="MF_00041"/>
    </source>
</evidence>
<reference key="1">
    <citation type="submission" date="2008-10" db="EMBL/GenBank/DDBJ databases">
        <title>Genome sequence of Bacillus cereus AH820.</title>
        <authorList>
            <person name="Dodson R.J."/>
            <person name="Durkin A.S."/>
            <person name="Rosovitz M.J."/>
            <person name="Rasko D.A."/>
            <person name="Hoffmaster A."/>
            <person name="Ravel J."/>
            <person name="Sutton G."/>
        </authorList>
    </citation>
    <scope>NUCLEOTIDE SEQUENCE [LARGE SCALE GENOMIC DNA]</scope>
    <source>
        <strain>AH820</strain>
    </source>
</reference>